<gene>
    <name evidence="1" type="primary">leuD</name>
    <name type="ordered locus">ASA_3412</name>
</gene>
<protein>
    <recommendedName>
        <fullName evidence="1">3-isopropylmalate dehydratase small subunit</fullName>
        <ecNumber evidence="1">4.2.1.33</ecNumber>
    </recommendedName>
    <alternativeName>
        <fullName evidence="1">Alpha-IPM isomerase</fullName>
        <shortName evidence="1">IPMI</shortName>
    </alternativeName>
    <alternativeName>
        <fullName evidence="1">Isopropylmalate isomerase</fullName>
    </alternativeName>
</protein>
<comment type="function">
    <text evidence="1">Catalyzes the isomerization between 2-isopropylmalate and 3-isopropylmalate, via the formation of 2-isopropylmaleate.</text>
</comment>
<comment type="catalytic activity">
    <reaction evidence="1">
        <text>(2R,3S)-3-isopropylmalate = (2S)-2-isopropylmalate</text>
        <dbReference type="Rhea" id="RHEA:32287"/>
        <dbReference type="ChEBI" id="CHEBI:1178"/>
        <dbReference type="ChEBI" id="CHEBI:35121"/>
        <dbReference type="EC" id="4.2.1.33"/>
    </reaction>
</comment>
<comment type="pathway">
    <text evidence="1">Amino-acid biosynthesis; L-leucine biosynthesis; L-leucine from 3-methyl-2-oxobutanoate: step 2/4.</text>
</comment>
<comment type="subunit">
    <text evidence="1">Heterodimer of LeuC and LeuD.</text>
</comment>
<comment type="similarity">
    <text evidence="1">Belongs to the LeuD family. LeuD type 1 subfamily.</text>
</comment>
<proteinExistence type="inferred from homology"/>
<sequence length="199" mass="22181">MTGFKQHKGIAVPLDSANVDTDAIIPKQFLQKVNRIGFGKHLFHDWRFLDDAGQQPNPEFVLNQPRYAGASILLARENFGCGSSREHAPWALADYGFKTLIASSFADIFYGNAINNGLVPVRLKEEEVDLLFQLVATQPGIEIEVDLEANQVRAGELSFGFEIDEFRRYCLLNGLDAIGLTLQHEATISAFEAKQPSWI</sequence>
<evidence type="ECO:0000255" key="1">
    <source>
        <dbReference type="HAMAP-Rule" id="MF_01031"/>
    </source>
</evidence>
<feature type="chain" id="PRO_1000063725" description="3-isopropylmalate dehydratase small subunit">
    <location>
        <begin position="1"/>
        <end position="199"/>
    </location>
</feature>
<reference key="1">
    <citation type="journal article" date="2008" name="BMC Genomics">
        <title>The genome of Aeromonas salmonicida subsp. salmonicida A449: insights into the evolution of a fish pathogen.</title>
        <authorList>
            <person name="Reith M.E."/>
            <person name="Singh R.K."/>
            <person name="Curtis B."/>
            <person name="Boyd J.M."/>
            <person name="Bouevitch A."/>
            <person name="Kimball J."/>
            <person name="Munholland J."/>
            <person name="Murphy C."/>
            <person name="Sarty D."/>
            <person name="Williams J."/>
            <person name="Nash J.H."/>
            <person name="Johnson S.C."/>
            <person name="Brown L.L."/>
        </authorList>
    </citation>
    <scope>NUCLEOTIDE SEQUENCE [LARGE SCALE GENOMIC DNA]</scope>
    <source>
        <strain>A449</strain>
    </source>
</reference>
<dbReference type="EC" id="4.2.1.33" evidence="1"/>
<dbReference type="EMBL" id="CP000644">
    <property type="protein sequence ID" value="ABO91387.1"/>
    <property type="molecule type" value="Genomic_DNA"/>
</dbReference>
<dbReference type="RefSeq" id="WP_005311585.1">
    <property type="nucleotide sequence ID" value="NC_009348.1"/>
</dbReference>
<dbReference type="SMR" id="A4SR65"/>
<dbReference type="STRING" id="29491.GCA_000820065_03807"/>
<dbReference type="KEGG" id="asa:ASA_3412"/>
<dbReference type="PATRIC" id="fig|382245.13.peg.3400"/>
<dbReference type="eggNOG" id="COG0066">
    <property type="taxonomic scope" value="Bacteria"/>
</dbReference>
<dbReference type="HOGENOM" id="CLU_081378_0_3_6"/>
<dbReference type="UniPathway" id="UPA00048">
    <property type="reaction ID" value="UER00071"/>
</dbReference>
<dbReference type="Proteomes" id="UP000000225">
    <property type="component" value="Chromosome"/>
</dbReference>
<dbReference type="GO" id="GO:0009316">
    <property type="term" value="C:3-isopropylmalate dehydratase complex"/>
    <property type="evidence" value="ECO:0007669"/>
    <property type="project" value="InterPro"/>
</dbReference>
<dbReference type="GO" id="GO:0003861">
    <property type="term" value="F:3-isopropylmalate dehydratase activity"/>
    <property type="evidence" value="ECO:0007669"/>
    <property type="project" value="UniProtKB-UniRule"/>
</dbReference>
<dbReference type="GO" id="GO:0009098">
    <property type="term" value="P:L-leucine biosynthetic process"/>
    <property type="evidence" value="ECO:0007669"/>
    <property type="project" value="UniProtKB-UniRule"/>
</dbReference>
<dbReference type="CDD" id="cd01577">
    <property type="entry name" value="IPMI_Swivel"/>
    <property type="match status" value="1"/>
</dbReference>
<dbReference type="FunFam" id="3.20.19.10:FF:000003">
    <property type="entry name" value="3-isopropylmalate dehydratase small subunit"/>
    <property type="match status" value="1"/>
</dbReference>
<dbReference type="Gene3D" id="3.20.19.10">
    <property type="entry name" value="Aconitase, domain 4"/>
    <property type="match status" value="1"/>
</dbReference>
<dbReference type="HAMAP" id="MF_01031">
    <property type="entry name" value="LeuD_type1"/>
    <property type="match status" value="1"/>
</dbReference>
<dbReference type="InterPro" id="IPR004431">
    <property type="entry name" value="3-IsopropMal_deHydase_ssu"/>
</dbReference>
<dbReference type="InterPro" id="IPR015928">
    <property type="entry name" value="Aconitase/3IPM_dehydase_swvl"/>
</dbReference>
<dbReference type="InterPro" id="IPR000573">
    <property type="entry name" value="AconitaseA/IPMdHydase_ssu_swvl"/>
</dbReference>
<dbReference type="InterPro" id="IPR033940">
    <property type="entry name" value="IPMI_Swivel"/>
</dbReference>
<dbReference type="InterPro" id="IPR050075">
    <property type="entry name" value="LeuD"/>
</dbReference>
<dbReference type="NCBIfam" id="TIGR00171">
    <property type="entry name" value="leuD"/>
    <property type="match status" value="1"/>
</dbReference>
<dbReference type="NCBIfam" id="NF002458">
    <property type="entry name" value="PRK01641.1"/>
    <property type="match status" value="1"/>
</dbReference>
<dbReference type="PANTHER" id="PTHR43345:SF5">
    <property type="entry name" value="3-ISOPROPYLMALATE DEHYDRATASE SMALL SUBUNIT"/>
    <property type="match status" value="1"/>
</dbReference>
<dbReference type="PANTHER" id="PTHR43345">
    <property type="entry name" value="3-ISOPROPYLMALATE DEHYDRATASE SMALL SUBUNIT 2-RELATED-RELATED"/>
    <property type="match status" value="1"/>
</dbReference>
<dbReference type="Pfam" id="PF00694">
    <property type="entry name" value="Aconitase_C"/>
    <property type="match status" value="1"/>
</dbReference>
<dbReference type="SUPFAM" id="SSF52016">
    <property type="entry name" value="LeuD/IlvD-like"/>
    <property type="match status" value="1"/>
</dbReference>
<keyword id="KW-0028">Amino-acid biosynthesis</keyword>
<keyword id="KW-0100">Branched-chain amino acid biosynthesis</keyword>
<keyword id="KW-0432">Leucine biosynthesis</keyword>
<keyword id="KW-0456">Lyase</keyword>
<accession>A4SR65</accession>
<name>LEUD_AERS4</name>
<organism>
    <name type="scientific">Aeromonas salmonicida (strain A449)</name>
    <dbReference type="NCBI Taxonomy" id="382245"/>
    <lineage>
        <taxon>Bacteria</taxon>
        <taxon>Pseudomonadati</taxon>
        <taxon>Pseudomonadota</taxon>
        <taxon>Gammaproteobacteria</taxon>
        <taxon>Aeromonadales</taxon>
        <taxon>Aeromonadaceae</taxon>
        <taxon>Aeromonas</taxon>
    </lineage>
</organism>